<accession>P41474</accession>
<name>Y084_NPVAC</name>
<keyword id="KW-1185">Reference proteome</keyword>
<protein>
    <recommendedName>
        <fullName>Uncharacterized 21.7 kDa protein in GP41-PNK intergenic region</fullName>
    </recommendedName>
</protein>
<reference key="1">
    <citation type="journal article" date="1994" name="Virology">
        <title>The complete DNA sequence of Autographa californica nuclear polyhedrosis virus.</title>
        <authorList>
            <person name="Ayres M.D."/>
            <person name="Howard S.C."/>
            <person name="Kuzio J."/>
            <person name="Lopez-Ferber M."/>
            <person name="Possee R.D."/>
        </authorList>
    </citation>
    <scope>NUCLEOTIDE SEQUENCE [LARGE SCALE GENOMIC DNA]</scope>
    <source>
        <strain>C6</strain>
    </source>
</reference>
<proteinExistence type="predicted"/>
<dbReference type="EMBL" id="L22858">
    <property type="protein sequence ID" value="AAA66714.1"/>
    <property type="molecule type" value="Genomic_DNA"/>
</dbReference>
<dbReference type="PIR" id="E72860">
    <property type="entry name" value="E72860"/>
</dbReference>
<dbReference type="RefSeq" id="NP_054114.1">
    <property type="nucleotide sequence ID" value="NC_001623.1"/>
</dbReference>
<dbReference type="GeneID" id="1403917"/>
<dbReference type="KEGG" id="vg:1403917"/>
<dbReference type="OrthoDB" id="34301at10239"/>
<dbReference type="Proteomes" id="UP000008292">
    <property type="component" value="Segment"/>
</dbReference>
<dbReference type="InterPro" id="IPR057201">
    <property type="entry name" value="DUF7879"/>
</dbReference>
<dbReference type="Pfam" id="PF25303">
    <property type="entry name" value="DUF7879"/>
    <property type="match status" value="1"/>
</dbReference>
<organism>
    <name type="scientific">Autographa californica nuclear polyhedrosis virus</name>
    <name type="common">AcMNPV</name>
    <dbReference type="NCBI Taxonomy" id="46015"/>
    <lineage>
        <taxon>Viruses</taxon>
        <taxon>Viruses incertae sedis</taxon>
        <taxon>Naldaviricetes</taxon>
        <taxon>Lefavirales</taxon>
        <taxon>Baculoviridae</taxon>
        <taxon>Alphabaculovirus</taxon>
        <taxon>Alphabaculovirus aucalifornicae</taxon>
    </lineage>
</organism>
<feature type="chain" id="PRO_0000133024" description="Uncharacterized 21.7 kDa protein in GP41-PNK intergenic region">
    <location>
        <begin position="1"/>
        <end position="188"/>
    </location>
</feature>
<organismHost>
    <name type="scientific">Lepidoptera</name>
    <name type="common">butterflies and moths</name>
    <dbReference type="NCBI Taxonomy" id="7088"/>
</organismHost>
<sequence>MIASINNRTKLNFFHLLVTMFRIYPNNTTVPGCLVGDIIQVRYKDVSHIRFLSDYLSLMPNVAIVNEYGPNNQLVIKRKNKSLKSLQDLCLDKIAVSLKKPFRQLKSLNAVCLMRDIIFSLGLPIIFNPALLQRKVPQRSVGYFMNSKLERFANCDRGHVVEEKQLQSNLYIDYFCMICGLNVFKIKE</sequence>